<organism>
    <name type="scientific">Caenorhabditis briggsae</name>
    <dbReference type="NCBI Taxonomy" id="6238"/>
    <lineage>
        <taxon>Eukaryota</taxon>
        <taxon>Metazoa</taxon>
        <taxon>Ecdysozoa</taxon>
        <taxon>Nematoda</taxon>
        <taxon>Chromadorea</taxon>
        <taxon>Rhabditida</taxon>
        <taxon>Rhabditina</taxon>
        <taxon>Rhabditomorpha</taxon>
        <taxon>Rhabditoidea</taxon>
        <taxon>Rhabditidae</taxon>
        <taxon>Peloderinae</taxon>
        <taxon>Caenorhabditis</taxon>
    </lineage>
</organism>
<reference evidence="3" key="1">
    <citation type="journal article" date="2003" name="PLoS Biol.">
        <title>The genome sequence of Caenorhabditis briggsae: a platform for comparative genomics.</title>
        <authorList>
            <person name="Stein L.D."/>
            <person name="Bao Z."/>
            <person name="Blasiar D."/>
            <person name="Blumenthal T."/>
            <person name="Brent M.R."/>
            <person name="Chen N."/>
            <person name="Chinwalla A."/>
            <person name="Clarke L."/>
            <person name="Clee C."/>
            <person name="Coghlan A."/>
            <person name="Coulson A."/>
            <person name="D'Eustachio P."/>
            <person name="Fitch D.H.A."/>
            <person name="Fulton L.A."/>
            <person name="Fulton R.E."/>
            <person name="Griffiths-Jones S."/>
            <person name="Harris T.W."/>
            <person name="Hillier L.W."/>
            <person name="Kamath R."/>
            <person name="Kuwabara P.E."/>
            <person name="Mardis E.R."/>
            <person name="Marra M.A."/>
            <person name="Miner T.L."/>
            <person name="Minx P."/>
            <person name="Mullikin J.C."/>
            <person name="Plumb R.W."/>
            <person name="Rogers J."/>
            <person name="Schein J.E."/>
            <person name="Sohrmann M."/>
            <person name="Spieth J."/>
            <person name="Stajich J.E."/>
            <person name="Wei C."/>
            <person name="Willey D."/>
            <person name="Wilson R.K."/>
            <person name="Durbin R.M."/>
            <person name="Waterston R.H."/>
        </authorList>
    </citation>
    <scope>NUCLEOTIDE SEQUENCE [LARGE SCALE GENOMIC DNA]</scope>
    <source>
        <strain>AF16</strain>
    </source>
</reference>
<gene>
    <name evidence="3" type="primary">twk-12</name>
    <name type="ORF">CBG09670</name>
</gene>
<feature type="chain" id="PRO_0000397232" description="TWiK family of potassium channels protein 12">
    <location>
        <begin position="1"/>
        <end position="687"/>
    </location>
</feature>
<feature type="topological domain" description="Cytoplasmic" evidence="1">
    <location>
        <begin position="1"/>
        <end position="21"/>
    </location>
</feature>
<feature type="transmembrane region" description="Helical" evidence="1">
    <location>
        <begin position="22"/>
        <end position="42"/>
    </location>
</feature>
<feature type="intramembrane region" description="Pore-forming; Name=Pore-forming 1" evidence="1">
    <location>
        <begin position="112"/>
        <end position="132"/>
    </location>
</feature>
<feature type="transmembrane region" description="Helical" evidence="1">
    <location>
        <begin position="142"/>
        <end position="162"/>
    </location>
</feature>
<feature type="topological domain" description="Cytoplasmic" evidence="1">
    <location>
        <begin position="163"/>
        <end position="212"/>
    </location>
</feature>
<feature type="transmembrane region" description="Helical" evidence="1">
    <location>
        <begin position="213"/>
        <end position="233"/>
    </location>
</feature>
<feature type="intramembrane region" description="Pore-forming; Name=Pore-forming 1" evidence="1">
    <location>
        <begin position="242"/>
        <end position="262"/>
    </location>
</feature>
<feature type="transmembrane region" description="Helical" evidence="1">
    <location>
        <begin position="270"/>
        <end position="290"/>
    </location>
</feature>
<feature type="topological domain" description="Cytoplasmic" evidence="1">
    <location>
        <begin position="291"/>
        <end position="687"/>
    </location>
</feature>
<feature type="region of interest" description="Disordered" evidence="2">
    <location>
        <begin position="661"/>
        <end position="687"/>
    </location>
</feature>
<feature type="compositionally biased region" description="Basic and acidic residues" evidence="2">
    <location>
        <begin position="677"/>
        <end position="687"/>
    </location>
</feature>
<feature type="glycosylation site" description="N-linked (GlcNAc...) asparagine" evidence="1">
    <location>
        <position position="53"/>
    </location>
</feature>
<feature type="glycosylation site" description="N-linked (GlcNAc...) asparagine" evidence="1">
    <location>
        <position position="77"/>
    </location>
</feature>
<feature type="glycosylation site" description="N-linked (GlcNAc...) asparagine" evidence="1">
    <location>
        <position position="98"/>
    </location>
</feature>
<protein>
    <recommendedName>
        <fullName>TWiK family of potassium channels protein 12</fullName>
    </recommendedName>
</protein>
<dbReference type="EMBL" id="HE600998">
    <property type="protein sequence ID" value="CAP28945.2"/>
    <property type="molecule type" value="Genomic_DNA"/>
</dbReference>
<dbReference type="FunCoup" id="A8X8I4">
    <property type="interactions" value="182"/>
</dbReference>
<dbReference type="STRING" id="6238.A8X8I4"/>
<dbReference type="GlyCosmos" id="A8X8I4">
    <property type="glycosylation" value="3 sites, No reported glycans"/>
</dbReference>
<dbReference type="EnsemblMetazoa" id="CBG09670.1">
    <property type="protein sequence ID" value="CBG09670.1"/>
    <property type="gene ID" value="WBGene00031224"/>
</dbReference>
<dbReference type="WormBase" id="CBG09670">
    <property type="protein sequence ID" value="CBP25527"/>
    <property type="gene ID" value="WBGene00031224"/>
    <property type="gene designation" value="Cbr-twk-12"/>
</dbReference>
<dbReference type="eggNOG" id="KOG1418">
    <property type="taxonomic scope" value="Eukaryota"/>
</dbReference>
<dbReference type="HOGENOM" id="CLU_476700_0_0_1"/>
<dbReference type="InParanoid" id="A8X8I4"/>
<dbReference type="OMA" id="RMAPNLM"/>
<dbReference type="Proteomes" id="UP000008549">
    <property type="component" value="Unassembled WGS sequence"/>
</dbReference>
<dbReference type="GO" id="GO:0005886">
    <property type="term" value="C:plasma membrane"/>
    <property type="evidence" value="ECO:0000318"/>
    <property type="project" value="GO_Central"/>
</dbReference>
<dbReference type="GO" id="GO:0015271">
    <property type="term" value="F:outward rectifier potassium channel activity"/>
    <property type="evidence" value="ECO:0000318"/>
    <property type="project" value="GO_Central"/>
</dbReference>
<dbReference type="GO" id="GO:0022841">
    <property type="term" value="F:potassium ion leak channel activity"/>
    <property type="evidence" value="ECO:0000318"/>
    <property type="project" value="GO_Central"/>
</dbReference>
<dbReference type="GO" id="GO:0071805">
    <property type="term" value="P:potassium ion transmembrane transport"/>
    <property type="evidence" value="ECO:0000318"/>
    <property type="project" value="GO_Central"/>
</dbReference>
<dbReference type="FunFam" id="1.10.287.70:FF:000332">
    <property type="entry name" value="TWiK family of potassium channels protein 12"/>
    <property type="match status" value="1"/>
</dbReference>
<dbReference type="Gene3D" id="1.10.287.70">
    <property type="match status" value="1"/>
</dbReference>
<dbReference type="InterPro" id="IPR003280">
    <property type="entry name" value="2pore_dom_K_chnl"/>
</dbReference>
<dbReference type="InterPro" id="IPR013099">
    <property type="entry name" value="K_chnl_dom"/>
</dbReference>
<dbReference type="PANTHER" id="PTHR11003">
    <property type="entry name" value="POTASSIUM CHANNEL, SUBFAMILY K"/>
    <property type="match status" value="1"/>
</dbReference>
<dbReference type="PANTHER" id="PTHR11003:SF152">
    <property type="entry name" value="TWIK FAMILY OF POTASSIUM CHANNELS PROTEIN 12"/>
    <property type="match status" value="1"/>
</dbReference>
<dbReference type="Pfam" id="PF07885">
    <property type="entry name" value="Ion_trans_2"/>
    <property type="match status" value="2"/>
</dbReference>
<dbReference type="PRINTS" id="PR01333">
    <property type="entry name" value="2POREKCHANEL"/>
</dbReference>
<dbReference type="SUPFAM" id="SSF81324">
    <property type="entry name" value="Voltage-gated potassium channels"/>
    <property type="match status" value="2"/>
</dbReference>
<name>TWK12_CAEBR</name>
<comment type="subcellular location">
    <subcellularLocation>
        <location evidence="1">Membrane</location>
        <topology evidence="1">Multi-pass membrane protein</topology>
    </subcellularLocation>
</comment>
<comment type="similarity">
    <text evidence="1">Belongs to the two pore domain potassium channel (TC 1.A.1.8) family.</text>
</comment>
<accession>A8X8I4</accession>
<proteinExistence type="inferred from homology"/>
<evidence type="ECO:0000255" key="1"/>
<evidence type="ECO:0000256" key="2">
    <source>
        <dbReference type="SAM" id="MobiDB-lite"/>
    </source>
</evidence>
<evidence type="ECO:0000312" key="3">
    <source>
        <dbReference type="EMBL" id="CAP28945.2"/>
    </source>
</evidence>
<keyword id="KW-0325">Glycoprotein</keyword>
<keyword id="KW-0407">Ion channel</keyword>
<keyword id="KW-0406">Ion transport</keyword>
<keyword id="KW-0472">Membrane</keyword>
<keyword id="KW-0630">Potassium</keyword>
<keyword id="KW-0631">Potassium channel</keyword>
<keyword id="KW-0633">Potassium transport</keyword>
<keyword id="KW-1185">Reference proteome</keyword>
<keyword id="KW-0812">Transmembrane</keyword>
<keyword id="KW-1133">Transmembrane helix</keyword>
<keyword id="KW-0813">Transport</keyword>
<sequence>MTLFQKLQWFCQLIRLRAYYKFLLLIAYTLFGAWLFRFYELQADIKRRAIYGNDTNLIRRQLAERWIEMHDDAVLRNNSVLRRRRAAEAVDWLLGELNLSDHMREFSEDTPWTWTGAMFYAGQLYTTIGYGYPTAKTDEGRICTVLYALFGIPCFLMYLKAIGKTLSKRLKKIYKRVRRSAFGKFLLPTRVTATKDGFEDPDASAEERKRKPFPIPIAIILLIIWICFSASMFCQWEKTWDFPSAVYFFIVSISTVGLGDMLFRTPDMMVFNFLLILFGLALLSMCFELITDRIAKWKQKRFDEHIKKVQKMAFQVFEKDPFVEEAPPLGIRMAPNLMQIAATHVSEEKRGFFAELKDWFAGKVTDNVIQSKLEDTDDESDEDEALEEFESPQVATLTANDLVVCTNGGATRRVSKQSYAFSDVSNLSNSKIPPGNNYGQLLDRIKAMEKFKPKKGDLDSRMFAKFLENKKLAKILEQTELRELATVSCQTDLSGLVVQRRNPKGRHARIGSCSSQSTMSTFLPRNNSHAPDEDSVMSITFGDLKFDYITEPLIDEYHLRESNHSIFDFDDDEVVRIPQKMLVSRPGMPPPPPSRPSQLASPLRALLEKEQKYDEDPEIQLTPRRLASLTDVQARKVKLGYDENLQHARLVCGLLPQDFDSPSTSTSTSMIDSGYDLSKRDAPVNIV</sequence>